<proteinExistence type="inferred from homology"/>
<accession>C4ZTH9</accession>
<feature type="chain" id="PRO_1000205221" description="Exodeoxyribonuclease 7 small subunit">
    <location>
        <begin position="1"/>
        <end position="80"/>
    </location>
</feature>
<name>EX7S_ECOBW</name>
<organism>
    <name type="scientific">Escherichia coli (strain K12 / MC4100 / BW2952)</name>
    <dbReference type="NCBI Taxonomy" id="595496"/>
    <lineage>
        <taxon>Bacteria</taxon>
        <taxon>Pseudomonadati</taxon>
        <taxon>Pseudomonadota</taxon>
        <taxon>Gammaproteobacteria</taxon>
        <taxon>Enterobacterales</taxon>
        <taxon>Enterobacteriaceae</taxon>
        <taxon>Escherichia</taxon>
    </lineage>
</organism>
<keyword id="KW-0963">Cytoplasm</keyword>
<keyword id="KW-0269">Exonuclease</keyword>
<keyword id="KW-0378">Hydrolase</keyword>
<keyword id="KW-0540">Nuclease</keyword>
<dbReference type="EC" id="3.1.11.6" evidence="1"/>
<dbReference type="EMBL" id="CP001396">
    <property type="protein sequence ID" value="ACR63053.1"/>
    <property type="molecule type" value="Genomic_DNA"/>
</dbReference>
<dbReference type="RefSeq" id="WP_001124935.1">
    <property type="nucleotide sequence ID" value="NC_012759.1"/>
</dbReference>
<dbReference type="SMR" id="C4ZTH9"/>
<dbReference type="GeneID" id="75202844"/>
<dbReference type="KEGG" id="ebw:BWG_0304"/>
<dbReference type="HOGENOM" id="CLU_145918_3_3_6"/>
<dbReference type="GO" id="GO:0005829">
    <property type="term" value="C:cytosol"/>
    <property type="evidence" value="ECO:0007669"/>
    <property type="project" value="TreeGrafter"/>
</dbReference>
<dbReference type="GO" id="GO:0009318">
    <property type="term" value="C:exodeoxyribonuclease VII complex"/>
    <property type="evidence" value="ECO:0007669"/>
    <property type="project" value="InterPro"/>
</dbReference>
<dbReference type="GO" id="GO:0008855">
    <property type="term" value="F:exodeoxyribonuclease VII activity"/>
    <property type="evidence" value="ECO:0007669"/>
    <property type="project" value="UniProtKB-UniRule"/>
</dbReference>
<dbReference type="GO" id="GO:0006308">
    <property type="term" value="P:DNA catabolic process"/>
    <property type="evidence" value="ECO:0007669"/>
    <property type="project" value="UniProtKB-UniRule"/>
</dbReference>
<dbReference type="FunFam" id="1.10.287.1040:FF:000001">
    <property type="entry name" value="Exodeoxyribonuclease 7 small subunit"/>
    <property type="match status" value="1"/>
</dbReference>
<dbReference type="Gene3D" id="1.10.287.1040">
    <property type="entry name" value="Exonuclease VII, small subunit"/>
    <property type="match status" value="1"/>
</dbReference>
<dbReference type="HAMAP" id="MF_00337">
    <property type="entry name" value="Exonuc_7_S"/>
    <property type="match status" value="1"/>
</dbReference>
<dbReference type="InterPro" id="IPR003761">
    <property type="entry name" value="Exonuc_VII_S"/>
</dbReference>
<dbReference type="InterPro" id="IPR037004">
    <property type="entry name" value="Exonuc_VII_ssu_sf"/>
</dbReference>
<dbReference type="NCBIfam" id="NF002137">
    <property type="entry name" value="PRK00977.1-1"/>
    <property type="match status" value="1"/>
</dbReference>
<dbReference type="NCBIfam" id="NF002140">
    <property type="entry name" value="PRK00977.1-4"/>
    <property type="match status" value="1"/>
</dbReference>
<dbReference type="NCBIfam" id="TIGR01280">
    <property type="entry name" value="xseB"/>
    <property type="match status" value="1"/>
</dbReference>
<dbReference type="PANTHER" id="PTHR34137">
    <property type="entry name" value="EXODEOXYRIBONUCLEASE 7 SMALL SUBUNIT"/>
    <property type="match status" value="1"/>
</dbReference>
<dbReference type="PANTHER" id="PTHR34137:SF1">
    <property type="entry name" value="EXODEOXYRIBONUCLEASE 7 SMALL SUBUNIT"/>
    <property type="match status" value="1"/>
</dbReference>
<dbReference type="Pfam" id="PF02609">
    <property type="entry name" value="Exonuc_VII_S"/>
    <property type="match status" value="1"/>
</dbReference>
<dbReference type="PIRSF" id="PIRSF006488">
    <property type="entry name" value="Exonuc_VII_S"/>
    <property type="match status" value="1"/>
</dbReference>
<dbReference type="SUPFAM" id="SSF116842">
    <property type="entry name" value="XseB-like"/>
    <property type="match status" value="1"/>
</dbReference>
<protein>
    <recommendedName>
        <fullName evidence="1">Exodeoxyribonuclease 7 small subunit</fullName>
        <ecNumber evidence="1">3.1.11.6</ecNumber>
    </recommendedName>
    <alternativeName>
        <fullName evidence="1">Exodeoxyribonuclease VII small subunit</fullName>
        <shortName evidence="1">Exonuclease VII small subunit</shortName>
    </alternativeName>
</protein>
<reference key="1">
    <citation type="journal article" date="2009" name="J. Bacteriol.">
        <title>Genomic sequencing reveals regulatory mutations and recombinational events in the widely used MC4100 lineage of Escherichia coli K-12.</title>
        <authorList>
            <person name="Ferenci T."/>
            <person name="Zhou Z."/>
            <person name="Betteridge T."/>
            <person name="Ren Y."/>
            <person name="Liu Y."/>
            <person name="Feng L."/>
            <person name="Reeves P.R."/>
            <person name="Wang L."/>
        </authorList>
    </citation>
    <scope>NUCLEOTIDE SEQUENCE [LARGE SCALE GENOMIC DNA]</scope>
    <source>
        <strain>K12 / MC4100 / BW2952</strain>
    </source>
</reference>
<sequence>MPKKNEAPASFEKALSELEQIVTRLESGDLPLEEALNEFERGVQLARQGQAKLQQAEQRVQILLSDNEDASLTPFTPDNE</sequence>
<gene>
    <name evidence="1" type="primary">xseB</name>
    <name type="ordered locus">BWG_0304</name>
</gene>
<evidence type="ECO:0000255" key="1">
    <source>
        <dbReference type="HAMAP-Rule" id="MF_00337"/>
    </source>
</evidence>
<comment type="function">
    <text evidence="1">Bidirectionally degrades single-stranded DNA into large acid-insoluble oligonucleotides, which are then degraded further into small acid-soluble oligonucleotides.</text>
</comment>
<comment type="catalytic activity">
    <reaction evidence="1">
        <text>Exonucleolytic cleavage in either 5'- to 3'- or 3'- to 5'-direction to yield nucleoside 5'-phosphates.</text>
        <dbReference type="EC" id="3.1.11.6"/>
    </reaction>
</comment>
<comment type="subunit">
    <text evidence="1">Heterooligomer composed of large and small subunits.</text>
</comment>
<comment type="subcellular location">
    <subcellularLocation>
        <location evidence="1">Cytoplasm</location>
    </subcellularLocation>
</comment>
<comment type="similarity">
    <text evidence="1">Belongs to the XseB family.</text>
</comment>